<gene>
    <name type="primary">AIM6</name>
    <name type="ORF">EC1118_1D22_0155g</name>
</gene>
<accession>C8Z6N5</accession>
<dbReference type="EMBL" id="FN393064">
    <property type="protein sequence ID" value="CAY79051.1"/>
    <property type="molecule type" value="Genomic_DNA"/>
</dbReference>
<dbReference type="HOGENOM" id="CLU_031561_1_1_1"/>
<dbReference type="OrthoDB" id="1971at4893"/>
<dbReference type="Proteomes" id="UP000000286">
    <property type="component" value="Chromosome IV, Scaffold EC1118_1D22"/>
</dbReference>
<dbReference type="GO" id="GO:0008081">
    <property type="term" value="F:phosphoric diester hydrolase activity"/>
    <property type="evidence" value="ECO:0007669"/>
    <property type="project" value="InterPro"/>
</dbReference>
<dbReference type="GO" id="GO:0006629">
    <property type="term" value="P:lipid metabolic process"/>
    <property type="evidence" value="ECO:0007669"/>
    <property type="project" value="InterPro"/>
</dbReference>
<dbReference type="CDD" id="cd08577">
    <property type="entry name" value="PI-PLCc_GDPD_SF_unchar3"/>
    <property type="match status" value="1"/>
</dbReference>
<dbReference type="InterPro" id="IPR039559">
    <property type="entry name" value="AIM6_PI-PLC-like_dom"/>
</dbReference>
<dbReference type="InterPro" id="IPR051236">
    <property type="entry name" value="HAT_RTT109-like"/>
</dbReference>
<dbReference type="InterPro" id="IPR017946">
    <property type="entry name" value="PLC-like_Pdiesterase_TIM-brl"/>
</dbReference>
<dbReference type="PANTHER" id="PTHR31571">
    <property type="entry name" value="ALTERED INHERITANCE OF MITOCHONDRIA PROTEIN 6"/>
    <property type="match status" value="1"/>
</dbReference>
<dbReference type="PANTHER" id="PTHR31571:SF1">
    <property type="entry name" value="ALTERED INHERITANCE OF MITOCHONDRIA PROTEIN 6"/>
    <property type="match status" value="1"/>
</dbReference>
<dbReference type="SUPFAM" id="SSF51695">
    <property type="entry name" value="PLC-like phosphodiesterases"/>
    <property type="match status" value="1"/>
</dbReference>
<comment type="similarity">
    <text evidence="2">Belongs to the AIM6 family.</text>
</comment>
<organism>
    <name type="scientific">Saccharomyces cerevisiae (strain Lalvin EC1118 / Prise de mousse)</name>
    <name type="common">Baker's yeast</name>
    <dbReference type="NCBI Taxonomy" id="643680"/>
    <lineage>
        <taxon>Eukaryota</taxon>
        <taxon>Fungi</taxon>
        <taxon>Dikarya</taxon>
        <taxon>Ascomycota</taxon>
        <taxon>Saccharomycotina</taxon>
        <taxon>Saccharomycetes</taxon>
        <taxon>Saccharomycetales</taxon>
        <taxon>Saccharomycetaceae</taxon>
        <taxon>Saccharomyces</taxon>
    </lineage>
</organism>
<protein>
    <recommendedName>
        <fullName>Altered inheritance of mitochondria protein 6</fullName>
    </recommendedName>
</protein>
<proteinExistence type="inferred from homology"/>
<keyword id="KW-0732">Signal</keyword>
<name>AIM6_YEAS8</name>
<evidence type="ECO:0000255" key="1"/>
<evidence type="ECO:0000305" key="2"/>
<feature type="signal peptide" evidence="1">
    <location>
        <begin position="1"/>
        <end position="26"/>
    </location>
</feature>
<feature type="chain" id="PRO_0000408713" description="Altered inheritance of mitochondria protein 6">
    <location>
        <begin position="27"/>
        <end position="390"/>
    </location>
</feature>
<sequence length="390" mass="44341">MLGLKGCLTILIGYVIAVCALFSSRGRNPSLTDWEKLKDQKISNIDNFGLTGQHLLAFFQENLPFLSFSEEKYRHKHVSLYYDVFKEYILRRASSKKCLPVDSAIAKLNKDVNPMPVHSHNDYWRKLPLFEGLAYGASSTEADVWNIDEKILAVGHNEAYLDPVELTLDKLYTGPLLEILDEVNCQDSDSDRKNGVFFNSPETSLFFYIDFKSDDNELTYKLLMEQYFKSLIDSGYLTYYDMKKDEIIWRPVTVILTGNYPTSLDILDNGNDNGYFESSQRFAFLDAPLLSLEPKYSKLSVAATVSFSQLMKHCGSDHWKVSLRGRMDSNEISCAKSIIDGAHALKLKTRIWGAPTWPANLVETISRQIIHDLGSDLLNLDNLFMASSLI</sequence>
<reference key="1">
    <citation type="journal article" date="2009" name="Proc. Natl. Acad. Sci. U.S.A.">
        <title>Eukaryote-to-eukaryote gene transfer events revealed by the genome sequence of the wine yeast Saccharomyces cerevisiae EC1118.</title>
        <authorList>
            <person name="Novo M."/>
            <person name="Bigey F."/>
            <person name="Beyne E."/>
            <person name="Galeote V."/>
            <person name="Gavory F."/>
            <person name="Mallet S."/>
            <person name="Cambon B."/>
            <person name="Legras J.-L."/>
            <person name="Wincker P."/>
            <person name="Casaregola S."/>
            <person name="Dequin S."/>
        </authorList>
    </citation>
    <scope>NUCLEOTIDE SEQUENCE [LARGE SCALE GENOMIC DNA]</scope>
    <source>
        <strain>Lalvin EC1118 / Prise de mousse</strain>
    </source>
</reference>